<feature type="chain" id="PRO_0000189991" description="Dedicator of cytokinesis protein 4">
    <location>
        <begin position="1"/>
        <end position="1978"/>
    </location>
</feature>
<feature type="domain" description="SH3" evidence="3">
    <location>
        <begin position="6"/>
        <end position="67"/>
    </location>
</feature>
<feature type="domain" description="C2 DOCK-type" evidence="4">
    <location>
        <begin position="401"/>
        <end position="574"/>
    </location>
</feature>
<feature type="domain" description="DOCKER" evidence="5">
    <location>
        <begin position="1199"/>
        <end position="1605"/>
    </location>
</feature>
<feature type="region of interest" description="Disordered" evidence="6">
    <location>
        <begin position="1657"/>
        <end position="1738"/>
    </location>
</feature>
<feature type="region of interest" description="Disordered" evidence="6">
    <location>
        <begin position="1751"/>
        <end position="1978"/>
    </location>
</feature>
<feature type="short sequence motif" description="SH3-binding" evidence="2">
    <location>
        <begin position="1797"/>
        <end position="1803"/>
    </location>
</feature>
<feature type="compositionally biased region" description="Low complexity" evidence="6">
    <location>
        <begin position="1681"/>
        <end position="1712"/>
    </location>
</feature>
<feature type="compositionally biased region" description="Polar residues" evidence="6">
    <location>
        <begin position="1804"/>
        <end position="1818"/>
    </location>
</feature>
<feature type="compositionally biased region" description="Low complexity" evidence="6">
    <location>
        <begin position="1842"/>
        <end position="1872"/>
    </location>
</feature>
<feature type="compositionally biased region" description="Polar residues" evidence="6">
    <location>
        <begin position="1873"/>
        <end position="1882"/>
    </location>
</feature>
<feature type="compositionally biased region" description="Pro residues" evidence="6">
    <location>
        <begin position="1885"/>
        <end position="1895"/>
    </location>
</feature>
<feature type="compositionally biased region" description="Basic and acidic residues" evidence="6">
    <location>
        <begin position="1953"/>
        <end position="1966"/>
    </location>
</feature>
<feature type="modified residue" description="Phosphotyrosine" evidence="8">
    <location>
        <position position="167"/>
    </location>
</feature>
<feature type="modified residue" description="Phosphothreonine" evidence="9">
    <location>
        <position position="193"/>
    </location>
</feature>
<feature type="modified residue" description="Phosphoserine" evidence="9">
    <location>
        <position position="1608"/>
    </location>
</feature>
<feature type="modified residue" description="Phosphoserine" evidence="9">
    <location>
        <position position="1616"/>
    </location>
</feature>
<feature type="modified residue" description="Phosphoserine" evidence="1">
    <location>
        <position position="1623"/>
    </location>
</feature>
<feature type="modified residue" description="Phosphoserine" evidence="1">
    <location>
        <position position="1627"/>
    </location>
</feature>
<feature type="modified residue" description="Phosphoserine" evidence="1">
    <location>
        <position position="1629"/>
    </location>
</feature>
<feature type="modified residue" description="Phosphoserine" evidence="9">
    <location>
        <position position="1640"/>
    </location>
</feature>
<feature type="modified residue" description="Phosphoserine" evidence="9">
    <location>
        <position position="1778"/>
    </location>
</feature>
<feature type="splice variant" id="VSP_060556" description="In isoform 2.">
    <location>
        <begin position="1769"/>
        <end position="1806"/>
    </location>
</feature>
<feature type="splice variant" id="VSP_060557" description="In isoform 2.">
    <location>
        <begin position="1883"/>
        <end position="1886"/>
    </location>
</feature>
<gene>
    <name type="primary">Dock4</name>
    <name type="synonym">Kiaa0716</name>
</gene>
<keyword id="KW-0025">Alternative splicing</keyword>
<keyword id="KW-1003">Cell membrane</keyword>
<keyword id="KW-0963">Cytoplasm</keyword>
<keyword id="KW-0344">Guanine-nucleotide releasing factor</keyword>
<keyword id="KW-0472">Membrane</keyword>
<keyword id="KW-0597">Phosphoprotein</keyword>
<keyword id="KW-1185">Reference proteome</keyword>
<keyword id="KW-0728">SH3 domain</keyword>
<keyword id="KW-0729">SH3-binding</keyword>
<protein>
    <recommendedName>
        <fullName>Dedicator of cytokinesis protein 4</fullName>
    </recommendedName>
</protein>
<proteinExistence type="evidence at protein level"/>
<sequence>MWIPTEHEKYGVVIASFRGTVPYGLSLEIGDTVQILEKCDGWYRGFALKNPNIKGIFPSSYVHLKNACVKNKGQFEMVIPTEDSVITEMTSTLRDWGTMWKQLYVRNEGDLFHRLWHIMNEILDLRRQVLVGHLTHDRMKDVKRHITARLDWGNEQLGLDLVPRKEYAMVDPEDISITELYRLMEHRHRKKDTPVQASSHHLFVQMKSLMCSNLGEELEVIFSLFDSKENRPISERFFLRLNRNGLPKAPDKPERHCSLFVDLGSSELRKDIYITVHIIRIGRMGAGEKKNACSVQYRRPFGCAVLSIADLLTGETKDDLVLKVYMCNTESEWYQIHENIIKKLNARYNLTGSNAGLAVSLQLLHGDIEQIRREYSSVFSHGVSITRKLGFSDIIMPGEMRNDLYITVERGEFEKGGKSVARNVEVTMFIVDSNGQPLKDFISFGSGEPPASEYHSFVLYHNNSPRWSELLKLPIPVDKFRGSHIRFEFRHCSTKEKGEKKLFGFSFVPLMQEDGRTLPDGTHELIVHKCEENTNLQDTTRYLKLPFSKVIFLGNNNQTMKATKESFWITSFLCSTKLTQNGDMLDLLKWRTHPDKITGCLSKLKEIDGSEIVKFLQDTLDTLFGILDENSQKYGSKVFDSLVHIINLLQDSKFHHFKPVMDTYIESHFAGALAYRDLIKVLKWYVDRITEAERQEHIQEVLKAQEYIFKYIVQSRRLFSLATGGQNEEEFRCCIQELLMSVRFFLSQESKGTGALSQSQAVFLSSFPAVYSELLKLFDVREVANLVQDTLGSLPTIMHVDDSLQAIKLQCIGKTVESQLYTNPDSRYILLPVVLHHLHIHLQEQKDLIMCARILSNVFCLIKKNSSEKSVLEEIDVIVASLLDILLRTILEITSRPQASSSAMRLQFQDVTGEFVACLLSLLRQMTDRHYQQLLNSFSTKEELRDFLLQIFTVFRILIRPEMFPKDWTVMRLVANNVIITTVLYLSDALRKNFLNENFDYKIWDSYFYLAVIFINQLCLQLEMFTPSKKKKVLEKYGDMRVTMGCEIFSMWQNLGEHKLHFIPALIGPFLEVTLIPQPDLRNVMIPIFHDMMDWEQRRSGNFKQVEAKLIDKLDSLMSEGKGDETYRELFNSIIPLFGPYPSLLKKIERETWRESGVSLIATVTRLMERLLDYRDCMKIGEVDGKKIGCTVSLLNFYKTELNKEEMYIRYIHKLYDLHLKAQNFTEAAYTLLLYDELLEWSDRPLREFLTYPMQTEWQRKEHLHLTIIQNFDRGKCWENGIILCRKIAEQYESYYDYRNLSKMRMMEASLYDKIMDQQRLEPEFFRVGFYGKKFPFFLRNKEFVCRGHDYERLEAFQQRMLNEFPHAIAMQHANQPDETIFQAEAQYLQIYAVTPIPESQEVLQREGVPDNIKSFYKVNHIWKFRYDRPFHKGAKDKENEFKSLWVERTSLYLVQSLPGISRWFEVEKREVVEMSPLENAIEVLENKNQQLKTLISQCQTRQMQNINPLTMCLNGVIDAAVNGGVSRYQEAFFVKDYILSHPEDGEKIARLRELMLEQAQILEFGLAVHEKFVPQDMRPLHKKLVDQFFVMKSSFGIQEFPACIQASPVHFPNGSPRVCRNSAPASMSPDGTRVIPRRSPLSYPAVNRYSSSSLSSQASAEVSNITGQSESSDEVFNMQPSPSTSSLSSTHSASPNVTSSAPSSARASPLLSDKHKHSRENSCLSPRDRPCSAIYPTPVEPSQRMLFNHIGDGALPRSDPNLSAPEKAVNPTPSSWSLDSGKEAKNMSDSGKLISPPVPPRPTQTASPARHTTSVSPSPAGRSPLKGSVQSFTPSPVEYNSPGLSSNSPVLSGSYSSGISSLSRCSTSETSGFENQANEQSVPVPVPVPVPVPVPSFSGSEEPVRKESKTPPPYSVYERTLRRPVPLPHSLSIPVTSEPPALPPKPLAARSSHLENGTRRTEPGPRPRPLPRKVSQL</sequence>
<accession>P59764</accession>
<accession>B2RUG6</accession>
<reference key="1">
    <citation type="journal article" date="2003" name="DNA Res.">
        <title>Prediction of the coding sequences of mouse homologues of KIAA gene: II. The complete nucleotide sequences of 400 mouse KIAA-homologous cDNAs identified by screening of terminal sequences of cDNA clones randomly sampled from size-fractionated libraries.</title>
        <authorList>
            <person name="Okazaki N."/>
            <person name="Kikuno R."/>
            <person name="Ohara R."/>
            <person name="Inamoto S."/>
            <person name="Aizawa H."/>
            <person name="Yuasa S."/>
            <person name="Nakajima D."/>
            <person name="Nagase T."/>
            <person name="Ohara O."/>
            <person name="Koga H."/>
        </authorList>
    </citation>
    <scope>NUCLEOTIDE SEQUENCE [LARGE SCALE MRNA] (ISOFORM 1)</scope>
    <source>
        <tissue>Brain</tissue>
    </source>
</reference>
<reference key="2">
    <citation type="journal article" date="2004" name="Genome Res.">
        <title>The status, quality, and expansion of the NIH full-length cDNA project: the Mammalian Gene Collection (MGC).</title>
        <authorList>
            <consortium name="The MGC Project Team"/>
        </authorList>
    </citation>
    <scope>NUCLEOTIDE SEQUENCE [LARGE SCALE MRNA] (ISOFORM 2)</scope>
    <source>
        <tissue>Brain</tissue>
    </source>
</reference>
<reference key="3">
    <citation type="journal article" date="2006" name="J. Mol. Biol.">
        <title>An isoform of GTPase regulator DOCK4 localizes to the stereocilia in the inner ear and binds to harmonin (USH1C).</title>
        <authorList>
            <person name="Yan D."/>
            <person name="Li F."/>
            <person name="Hall M.L."/>
            <person name="Sage C."/>
            <person name="Hu W.H."/>
            <person name="Giallourakis C."/>
            <person name="Upadhyay G."/>
            <person name="Ouyang X.M."/>
            <person name="Du L.L."/>
            <person name="Bethea J.R."/>
            <person name="Chen Z.Y."/>
            <person name="Yajnik V."/>
            <person name="Liu X.Z."/>
        </authorList>
    </citation>
    <scope>TISSUE SPECIFICITY (ISOFORM 2)</scope>
    <scope>DEVELOPMENTAL STAGE (ISOFORM 2)</scope>
</reference>
<reference key="4">
    <citation type="journal article" date="2008" name="J. Proteome Res.">
        <title>Large-scale identification and evolution indexing of tyrosine phosphorylation sites from murine brain.</title>
        <authorList>
            <person name="Ballif B.A."/>
            <person name="Carey G.R."/>
            <person name="Sunyaev S.R."/>
            <person name="Gygi S.P."/>
        </authorList>
    </citation>
    <scope>PHOSPHORYLATION [LARGE SCALE ANALYSIS] AT TYR-167</scope>
    <scope>IDENTIFICATION BY MASS SPECTROMETRY [LARGE SCALE ANALYSIS]</scope>
    <source>
        <tissue>Brain</tissue>
    </source>
</reference>
<reference key="5">
    <citation type="journal article" date="2010" name="Cell">
        <title>A tissue-specific atlas of mouse protein phosphorylation and expression.</title>
        <authorList>
            <person name="Huttlin E.L."/>
            <person name="Jedrychowski M.P."/>
            <person name="Elias J.E."/>
            <person name="Goswami T."/>
            <person name="Rad R."/>
            <person name="Beausoleil S.A."/>
            <person name="Villen J."/>
            <person name="Haas W."/>
            <person name="Sowa M.E."/>
            <person name="Gygi S.P."/>
        </authorList>
    </citation>
    <scope>PHOSPHORYLATION [LARGE SCALE ANALYSIS] AT THR-193; SER-1608; SER-1616; SER-1640 AND SER-1778</scope>
    <scope>IDENTIFICATION BY MASS SPECTROMETRY [LARGE SCALE ANALYSIS]</scope>
    <source>
        <tissue>Brain</tissue>
        <tissue>Kidney</tissue>
        <tissue>Liver</tissue>
        <tissue>Lung</tissue>
        <tissue>Pancreas</tissue>
        <tissue>Spleen</tissue>
    </source>
</reference>
<dbReference type="EMBL" id="AK122353">
    <property type="protein sequence ID" value="BAC65635.1"/>
    <property type="molecule type" value="mRNA"/>
</dbReference>
<dbReference type="EMBL" id="BC141138">
    <property type="protein sequence ID" value="AAI41139.1"/>
    <property type="molecule type" value="mRNA"/>
</dbReference>
<dbReference type="CCDS" id="CCDS25895.1">
    <molecule id="P59764-1"/>
</dbReference>
<dbReference type="RefSeq" id="NP_766391.2">
    <molecule id="P59764-1"/>
    <property type="nucleotide sequence ID" value="NM_172803.2"/>
</dbReference>
<dbReference type="SMR" id="P59764"/>
<dbReference type="BioGRID" id="231952">
    <property type="interactions" value="4"/>
</dbReference>
<dbReference type="FunCoup" id="P59764">
    <property type="interactions" value="2644"/>
</dbReference>
<dbReference type="IntAct" id="P59764">
    <property type="interactions" value="1"/>
</dbReference>
<dbReference type="MINT" id="P59764"/>
<dbReference type="STRING" id="10090.ENSMUSP00000047387"/>
<dbReference type="GlyGen" id="P59764">
    <property type="glycosylation" value="5 sites, 1 O-linked glycan (3 sites)"/>
</dbReference>
<dbReference type="iPTMnet" id="P59764"/>
<dbReference type="PhosphoSitePlus" id="P59764"/>
<dbReference type="SwissPalm" id="P59764"/>
<dbReference type="PaxDb" id="10090-ENSMUSP00000047387"/>
<dbReference type="ProteomicsDB" id="279798">
    <molecule id="P59764-1"/>
</dbReference>
<dbReference type="Pumba" id="P59764"/>
<dbReference type="Antibodypedia" id="31488">
    <property type="antibodies" value="149 antibodies from 23 providers"/>
</dbReference>
<dbReference type="DNASU" id="238130"/>
<dbReference type="Ensembl" id="ENSMUST00000037488.8">
    <molecule id="P59764-1"/>
    <property type="protein sequence ID" value="ENSMUSP00000047387.7"/>
    <property type="gene ID" value="ENSMUSG00000035954.11"/>
</dbReference>
<dbReference type="GeneID" id="238130"/>
<dbReference type="KEGG" id="mmu:238130"/>
<dbReference type="UCSC" id="uc007nlh.1">
    <molecule id="P59764-1"/>
    <property type="organism name" value="mouse"/>
</dbReference>
<dbReference type="AGR" id="MGI:1918006"/>
<dbReference type="CTD" id="9732"/>
<dbReference type="MGI" id="MGI:1918006">
    <property type="gene designation" value="Dock4"/>
</dbReference>
<dbReference type="VEuPathDB" id="HostDB:ENSMUSG00000035954"/>
<dbReference type="eggNOG" id="KOG1998">
    <property type="taxonomic scope" value="Eukaryota"/>
</dbReference>
<dbReference type="eggNOG" id="KOG3166">
    <property type="taxonomic scope" value="Eukaryota"/>
</dbReference>
<dbReference type="GeneTree" id="ENSGT00940000155659"/>
<dbReference type="HOGENOM" id="CLU_000595_2_0_1"/>
<dbReference type="InParanoid" id="P59764"/>
<dbReference type="OMA" id="FCADTYG"/>
<dbReference type="OrthoDB" id="18896at2759"/>
<dbReference type="PhylomeDB" id="P59764"/>
<dbReference type="TreeFam" id="TF300423"/>
<dbReference type="Reactome" id="R-MMU-9013149">
    <property type="pathway name" value="RAC1 GTPase cycle"/>
</dbReference>
<dbReference type="Reactome" id="R-MMU-9013404">
    <property type="pathway name" value="RAC2 GTPase cycle"/>
</dbReference>
<dbReference type="Reactome" id="R-MMU-9013408">
    <property type="pathway name" value="RHOG GTPase cycle"/>
</dbReference>
<dbReference type="Reactome" id="R-MMU-983231">
    <property type="pathway name" value="Factors involved in megakaryocyte development and platelet production"/>
</dbReference>
<dbReference type="BioGRID-ORCS" id="238130">
    <property type="hits" value="3 hits in 77 CRISPR screens"/>
</dbReference>
<dbReference type="CD-CODE" id="CE726F99">
    <property type="entry name" value="Postsynaptic density"/>
</dbReference>
<dbReference type="ChiTaRS" id="Dock4">
    <property type="organism name" value="mouse"/>
</dbReference>
<dbReference type="PRO" id="PR:P59764"/>
<dbReference type="Proteomes" id="UP000000589">
    <property type="component" value="Chromosome 12"/>
</dbReference>
<dbReference type="RNAct" id="P59764">
    <property type="molecule type" value="protein"/>
</dbReference>
<dbReference type="Bgee" id="ENSMUSG00000035954">
    <property type="expression patterns" value="Expressed in lateral septal nucleus and 213 other cell types or tissues"/>
</dbReference>
<dbReference type="ExpressionAtlas" id="P59764">
    <property type="expression patterns" value="baseline and differential"/>
</dbReference>
<dbReference type="GO" id="GO:0005829">
    <property type="term" value="C:cytosol"/>
    <property type="evidence" value="ECO:0000250"/>
    <property type="project" value="UniProtKB"/>
</dbReference>
<dbReference type="GO" id="GO:0098978">
    <property type="term" value="C:glutamatergic synapse"/>
    <property type="evidence" value="ECO:0007669"/>
    <property type="project" value="Ensembl"/>
</dbReference>
<dbReference type="GO" id="GO:0005794">
    <property type="term" value="C:Golgi apparatus"/>
    <property type="evidence" value="ECO:0007669"/>
    <property type="project" value="Ensembl"/>
</dbReference>
<dbReference type="GO" id="GO:0016020">
    <property type="term" value="C:membrane"/>
    <property type="evidence" value="ECO:0000250"/>
    <property type="project" value="UniProtKB"/>
</dbReference>
<dbReference type="GO" id="GO:0005730">
    <property type="term" value="C:nucleolus"/>
    <property type="evidence" value="ECO:0007669"/>
    <property type="project" value="Ensembl"/>
</dbReference>
<dbReference type="GO" id="GO:0005886">
    <property type="term" value="C:plasma membrane"/>
    <property type="evidence" value="ECO:0007669"/>
    <property type="project" value="UniProtKB-SubCell"/>
</dbReference>
<dbReference type="GO" id="GO:0098794">
    <property type="term" value="C:postsynapse"/>
    <property type="evidence" value="ECO:0007669"/>
    <property type="project" value="Ensembl"/>
</dbReference>
<dbReference type="GO" id="GO:0032420">
    <property type="term" value="C:stereocilium"/>
    <property type="evidence" value="ECO:0000314"/>
    <property type="project" value="HGNC-UCL"/>
</dbReference>
<dbReference type="GO" id="GO:0032421">
    <property type="term" value="C:stereocilium bundle"/>
    <property type="evidence" value="ECO:0000314"/>
    <property type="project" value="HGNC-UCL"/>
</dbReference>
<dbReference type="GO" id="GO:0005096">
    <property type="term" value="F:GTPase activator activity"/>
    <property type="evidence" value="ECO:0007669"/>
    <property type="project" value="InterPro"/>
</dbReference>
<dbReference type="GO" id="GO:0005085">
    <property type="term" value="F:guanyl-nucleotide exchange factor activity"/>
    <property type="evidence" value="ECO:0000250"/>
    <property type="project" value="UniProtKB"/>
</dbReference>
<dbReference type="GO" id="GO:0030165">
    <property type="term" value="F:PDZ domain binding"/>
    <property type="evidence" value="ECO:0007669"/>
    <property type="project" value="Ensembl"/>
</dbReference>
<dbReference type="GO" id="GO:0030971">
    <property type="term" value="F:receptor tyrosine kinase binding"/>
    <property type="evidence" value="ECO:0007669"/>
    <property type="project" value="Ensembl"/>
</dbReference>
<dbReference type="GO" id="GO:0017124">
    <property type="term" value="F:SH3 domain binding"/>
    <property type="evidence" value="ECO:0007669"/>
    <property type="project" value="UniProtKB-KW"/>
</dbReference>
<dbReference type="GO" id="GO:0031267">
    <property type="term" value="F:small GTPase binding"/>
    <property type="evidence" value="ECO:0007669"/>
    <property type="project" value="Ensembl"/>
</dbReference>
<dbReference type="GO" id="GO:0060326">
    <property type="term" value="P:cell chemotaxis"/>
    <property type="evidence" value="ECO:0000250"/>
    <property type="project" value="UniProtKB"/>
</dbReference>
<dbReference type="GO" id="GO:1904694">
    <property type="term" value="P:negative regulation of vascular associated smooth muscle contraction"/>
    <property type="evidence" value="ECO:0007669"/>
    <property type="project" value="Ensembl"/>
</dbReference>
<dbReference type="GO" id="GO:1904754">
    <property type="term" value="P:positive regulation of vascular associated smooth muscle cell migration"/>
    <property type="evidence" value="ECO:0007669"/>
    <property type="project" value="Ensembl"/>
</dbReference>
<dbReference type="GO" id="GO:0150052">
    <property type="term" value="P:regulation of postsynapse assembly"/>
    <property type="evidence" value="ECO:0007669"/>
    <property type="project" value="Ensembl"/>
</dbReference>
<dbReference type="GO" id="GO:0007264">
    <property type="term" value="P:small GTPase-mediated signal transduction"/>
    <property type="evidence" value="ECO:0007669"/>
    <property type="project" value="InterPro"/>
</dbReference>
<dbReference type="CDD" id="cd08695">
    <property type="entry name" value="C2_Dock-B"/>
    <property type="match status" value="1"/>
</dbReference>
<dbReference type="CDD" id="cd11705">
    <property type="entry name" value="DHR2_DOCK4"/>
    <property type="match status" value="1"/>
</dbReference>
<dbReference type="CDD" id="cd12049">
    <property type="entry name" value="SH3_DOCK4_B"/>
    <property type="match status" value="1"/>
</dbReference>
<dbReference type="FunFam" id="1.25.40.410:FF:000003">
    <property type="entry name" value="Dedicator of cytokinesis protein 4"/>
    <property type="match status" value="1"/>
</dbReference>
<dbReference type="FunFam" id="2.30.30.40:FF:000057">
    <property type="entry name" value="Dedicator of cytokinesis protein 4"/>
    <property type="match status" value="1"/>
</dbReference>
<dbReference type="FunFam" id="2.60.40.150:FF:000045">
    <property type="entry name" value="Dedicator of cytokinesis protein 4"/>
    <property type="match status" value="1"/>
</dbReference>
<dbReference type="FunFam" id="1.20.1270.350:FF:000001">
    <property type="entry name" value="dedicator of cytokinesis protein 4"/>
    <property type="match status" value="1"/>
</dbReference>
<dbReference type="FunFam" id="1.20.58.740:FF:000003">
    <property type="entry name" value="dedicator of cytokinesis protein 4"/>
    <property type="match status" value="1"/>
</dbReference>
<dbReference type="Gene3D" id="1.20.58.740">
    <property type="match status" value="1"/>
</dbReference>
<dbReference type="Gene3D" id="1.25.40.410">
    <property type="match status" value="1"/>
</dbReference>
<dbReference type="Gene3D" id="2.60.40.150">
    <property type="entry name" value="C2 domain"/>
    <property type="match status" value="1"/>
</dbReference>
<dbReference type="Gene3D" id="1.20.1270.350">
    <property type="entry name" value="Dedicator of cytokinesis N-terminal subdomain"/>
    <property type="match status" value="1"/>
</dbReference>
<dbReference type="Gene3D" id="2.30.30.40">
    <property type="entry name" value="SH3 Domains"/>
    <property type="match status" value="1"/>
</dbReference>
<dbReference type="InterPro" id="IPR037811">
    <property type="entry name" value="C2_Dock-B"/>
</dbReference>
<dbReference type="InterPro" id="IPR027007">
    <property type="entry name" value="C2_DOCK-type_domain"/>
</dbReference>
<dbReference type="InterPro" id="IPR035892">
    <property type="entry name" value="C2_domain_sf"/>
</dbReference>
<dbReference type="InterPro" id="IPR037014">
    <property type="entry name" value="DHR2_DOCK4"/>
</dbReference>
<dbReference type="InterPro" id="IPR026791">
    <property type="entry name" value="DOCK"/>
</dbReference>
<dbReference type="InterPro" id="IPR035769">
    <property type="entry name" value="DOCK4_SH3"/>
</dbReference>
<dbReference type="InterPro" id="IPR043161">
    <property type="entry name" value="DOCK_C_lobe_A"/>
</dbReference>
<dbReference type="InterPro" id="IPR043162">
    <property type="entry name" value="DOCK_C_lobe_C"/>
</dbReference>
<dbReference type="InterPro" id="IPR032376">
    <property type="entry name" value="DOCK_N"/>
</dbReference>
<dbReference type="InterPro" id="IPR042455">
    <property type="entry name" value="DOCK_N_sub1"/>
</dbReference>
<dbReference type="InterPro" id="IPR027357">
    <property type="entry name" value="DOCKER_dom"/>
</dbReference>
<dbReference type="InterPro" id="IPR046769">
    <property type="entry name" value="DOCKER_Lobe_A"/>
</dbReference>
<dbReference type="InterPro" id="IPR046770">
    <property type="entry name" value="DOCKER_Lobe_B"/>
</dbReference>
<dbReference type="InterPro" id="IPR046773">
    <property type="entry name" value="DOCKER_Lobe_C"/>
</dbReference>
<dbReference type="InterPro" id="IPR036028">
    <property type="entry name" value="SH3-like_dom_sf"/>
</dbReference>
<dbReference type="InterPro" id="IPR001452">
    <property type="entry name" value="SH3_domain"/>
</dbReference>
<dbReference type="InterPro" id="IPR056372">
    <property type="entry name" value="TPR_DOCK"/>
</dbReference>
<dbReference type="PANTHER" id="PTHR45653">
    <property type="entry name" value="DEDICATOR OF CYTOKINESIS"/>
    <property type="match status" value="1"/>
</dbReference>
<dbReference type="PANTHER" id="PTHR45653:SF7">
    <property type="entry name" value="DEDICATOR OF CYTOKINESIS PROTEIN 4"/>
    <property type="match status" value="1"/>
</dbReference>
<dbReference type="Pfam" id="PF06920">
    <property type="entry name" value="DHR-2_Lobe_A"/>
    <property type="match status" value="1"/>
</dbReference>
<dbReference type="Pfam" id="PF20422">
    <property type="entry name" value="DHR-2_Lobe_B"/>
    <property type="match status" value="1"/>
</dbReference>
<dbReference type="Pfam" id="PF20421">
    <property type="entry name" value="DHR-2_Lobe_C"/>
    <property type="match status" value="1"/>
</dbReference>
<dbReference type="Pfam" id="PF14429">
    <property type="entry name" value="DOCK-C2"/>
    <property type="match status" value="1"/>
</dbReference>
<dbReference type="Pfam" id="PF16172">
    <property type="entry name" value="DOCK_N"/>
    <property type="match status" value="1"/>
</dbReference>
<dbReference type="Pfam" id="PF07653">
    <property type="entry name" value="SH3_2"/>
    <property type="match status" value="1"/>
</dbReference>
<dbReference type="Pfam" id="PF23554">
    <property type="entry name" value="TPR_DOCK"/>
    <property type="match status" value="1"/>
</dbReference>
<dbReference type="SMART" id="SM00326">
    <property type="entry name" value="SH3"/>
    <property type="match status" value="1"/>
</dbReference>
<dbReference type="SUPFAM" id="SSF50044">
    <property type="entry name" value="SH3-domain"/>
    <property type="match status" value="1"/>
</dbReference>
<dbReference type="PROSITE" id="PS51650">
    <property type="entry name" value="C2_DOCK"/>
    <property type="match status" value="1"/>
</dbReference>
<dbReference type="PROSITE" id="PS51651">
    <property type="entry name" value="DOCKER"/>
    <property type="match status" value="1"/>
</dbReference>
<dbReference type="PROSITE" id="PS50002">
    <property type="entry name" value="SH3"/>
    <property type="match status" value="1"/>
</dbReference>
<organism>
    <name type="scientific">Mus musculus</name>
    <name type="common">Mouse</name>
    <dbReference type="NCBI Taxonomy" id="10090"/>
    <lineage>
        <taxon>Eukaryota</taxon>
        <taxon>Metazoa</taxon>
        <taxon>Chordata</taxon>
        <taxon>Craniata</taxon>
        <taxon>Vertebrata</taxon>
        <taxon>Euteleostomi</taxon>
        <taxon>Mammalia</taxon>
        <taxon>Eutheria</taxon>
        <taxon>Euarchontoglires</taxon>
        <taxon>Glires</taxon>
        <taxon>Rodentia</taxon>
        <taxon>Myomorpha</taxon>
        <taxon>Muroidea</taxon>
        <taxon>Muridae</taxon>
        <taxon>Murinae</taxon>
        <taxon>Mus</taxon>
        <taxon>Mus</taxon>
    </lineage>
</organism>
<name>DOCK4_MOUSE</name>
<comment type="function">
    <text evidence="1">Functions as a guanine nucleotide exchange factor (GEF) that promotes the exchange of GDP to GTP, converting inactive GDP-bound small GTPases into their active GTP-bound form. Involved in regulation of adherens junction between cells. Plays a role in cell migration.</text>
</comment>
<comment type="function">
    <molecule>Isoform 2</molecule>
    <text evidence="1">Has a higher guanine nucleotide exchange factor activity compared to other isoforms.</text>
</comment>
<comment type="subunit">
    <text evidence="1">Interacts with nucleotide-free Rap1; functions as a guanine nucleotide exchange factor (GEF) for Rap1. Interacts (via DOCKER domain) with RAC1; functions as a guanine nucleotide exchange factor (GEF) for RAC1. Interacts with the SH3 domain of CRK. Interacts with FASLG. Interacts with ELMO2 and EPHA2; mediates activation of RAC1 by EPHA2. Interacts with USH1C (via PDZ 1 domain).</text>
</comment>
<comment type="subcellular location">
    <subcellularLocation>
        <location evidence="1">Cell membrane</location>
    </subcellularLocation>
    <subcellularLocation>
        <location evidence="1">Cytoplasm</location>
        <location evidence="1">Cytosol</location>
    </subcellularLocation>
    <text evidence="1">Colocalizes with EPHA2, RHOG and CTTN/cortactin at the tip of protrusions in migrating cells.</text>
</comment>
<comment type="alternative products">
    <event type="alternative splicing"/>
    <isoform>
        <id>P59764-1</id>
        <name>1</name>
        <sequence type="displayed"/>
    </isoform>
    <isoform>
        <id>P59764-2</id>
        <name>2</name>
        <sequence type="described" ref="VSP_060556 VSP_060557"/>
    </isoform>
</comment>
<comment type="tissue specificity">
    <molecule>Isoform 2</molecule>
    <text evidence="7">Expressed in inner ear (at protein level).</text>
</comment>
<comment type="developmental stage">
    <molecule>Isoform 2</molecule>
    <text evidence="7">Expressed in the utricular hair bundles at 14.5 dpc (at protein level) (PubMed:16464467). At P1 expressed in cochlear hair bundles of the sensory cells extending to the apical surface of the greater epithelial ridge and in the vestibule where it is restricted to hair bundles (at protein level) (PubMed:16464467).</text>
</comment>
<comment type="domain">
    <text evidence="1">The DOCKER domain mediates interaction with small GTPases like RAC1 and is required for their activation.</text>
</comment>
<comment type="similarity">
    <text evidence="4">Belongs to the DOCK family.</text>
</comment>
<evidence type="ECO:0000250" key="1">
    <source>
        <dbReference type="UniProtKB" id="Q8N1I0"/>
    </source>
</evidence>
<evidence type="ECO:0000255" key="2"/>
<evidence type="ECO:0000255" key="3">
    <source>
        <dbReference type="PROSITE-ProRule" id="PRU00192"/>
    </source>
</evidence>
<evidence type="ECO:0000255" key="4">
    <source>
        <dbReference type="PROSITE-ProRule" id="PRU00983"/>
    </source>
</evidence>
<evidence type="ECO:0000255" key="5">
    <source>
        <dbReference type="PROSITE-ProRule" id="PRU00984"/>
    </source>
</evidence>
<evidence type="ECO:0000256" key="6">
    <source>
        <dbReference type="SAM" id="MobiDB-lite"/>
    </source>
</evidence>
<evidence type="ECO:0000269" key="7">
    <source>
    </source>
</evidence>
<evidence type="ECO:0007744" key="8">
    <source>
    </source>
</evidence>
<evidence type="ECO:0007744" key="9">
    <source>
    </source>
</evidence>